<keyword id="KW-0687">Ribonucleoprotein</keyword>
<keyword id="KW-0689">Ribosomal protein</keyword>
<keyword id="KW-0694">RNA-binding</keyword>
<keyword id="KW-0699">rRNA-binding</keyword>
<proteinExistence type="inferred from homology"/>
<accession>B1X6F6</accession>
<name>RL18_ECODH</name>
<sequence>MDKKSARIRRATRARRKLQELGATRLVVHRTPRHIYAQVIAPNGSEVLVAASTVEKAIAEQLKYTGNKDAAAAVGKAVAERALEKGIKDVSFDRSGFQYHGRVQALADAAREAGLQF</sequence>
<comment type="function">
    <text evidence="1">This is one of the proteins that bind and probably mediate the attachment of the 5S RNA into the large ribosomal subunit, where it forms part of the central protuberance.</text>
</comment>
<comment type="subunit">
    <text evidence="1">Part of the 50S ribosomal subunit; part of the 5S rRNA/L5/L18/L25 subcomplex. Contacts the 5S and 23S rRNAs.</text>
</comment>
<comment type="similarity">
    <text evidence="1">Belongs to the universal ribosomal protein uL18 family.</text>
</comment>
<feature type="chain" id="PRO_1000142660" description="Large ribosomal subunit protein uL18">
    <location>
        <begin position="1"/>
        <end position="117"/>
    </location>
</feature>
<gene>
    <name evidence="1" type="primary">rplR</name>
    <name type="ordered locus">ECDH10B_3479</name>
</gene>
<reference key="1">
    <citation type="journal article" date="2008" name="J. Bacteriol.">
        <title>The complete genome sequence of Escherichia coli DH10B: insights into the biology of a laboratory workhorse.</title>
        <authorList>
            <person name="Durfee T."/>
            <person name="Nelson R."/>
            <person name="Baldwin S."/>
            <person name="Plunkett G. III"/>
            <person name="Burland V."/>
            <person name="Mau B."/>
            <person name="Petrosino J.F."/>
            <person name="Qin X."/>
            <person name="Muzny D.M."/>
            <person name="Ayele M."/>
            <person name="Gibbs R.A."/>
            <person name="Csorgo B."/>
            <person name="Posfai G."/>
            <person name="Weinstock G.M."/>
            <person name="Blattner F.R."/>
        </authorList>
    </citation>
    <scope>NUCLEOTIDE SEQUENCE [LARGE SCALE GENOMIC DNA]</scope>
    <source>
        <strain>K12 / DH10B</strain>
    </source>
</reference>
<evidence type="ECO:0000255" key="1">
    <source>
        <dbReference type="HAMAP-Rule" id="MF_01337"/>
    </source>
</evidence>
<evidence type="ECO:0000305" key="2"/>
<protein>
    <recommendedName>
        <fullName evidence="1">Large ribosomal subunit protein uL18</fullName>
    </recommendedName>
    <alternativeName>
        <fullName evidence="2">50S ribosomal protein L18</fullName>
    </alternativeName>
</protein>
<organism>
    <name type="scientific">Escherichia coli (strain K12 / DH10B)</name>
    <dbReference type="NCBI Taxonomy" id="316385"/>
    <lineage>
        <taxon>Bacteria</taxon>
        <taxon>Pseudomonadati</taxon>
        <taxon>Pseudomonadota</taxon>
        <taxon>Gammaproteobacteria</taxon>
        <taxon>Enterobacterales</taxon>
        <taxon>Enterobacteriaceae</taxon>
        <taxon>Escherichia</taxon>
    </lineage>
</organism>
<dbReference type="EMBL" id="CP000948">
    <property type="protein sequence ID" value="ACB04366.1"/>
    <property type="molecule type" value="Genomic_DNA"/>
</dbReference>
<dbReference type="RefSeq" id="WP_000358960.1">
    <property type="nucleotide sequence ID" value="NC_010473.1"/>
</dbReference>
<dbReference type="SMR" id="B1X6F6"/>
<dbReference type="GeneID" id="98390426"/>
<dbReference type="KEGG" id="ecd:ECDH10B_3479"/>
<dbReference type="HOGENOM" id="CLU_098841_0_1_6"/>
<dbReference type="GO" id="GO:0022625">
    <property type="term" value="C:cytosolic large ribosomal subunit"/>
    <property type="evidence" value="ECO:0007669"/>
    <property type="project" value="TreeGrafter"/>
</dbReference>
<dbReference type="GO" id="GO:0008097">
    <property type="term" value="F:5S rRNA binding"/>
    <property type="evidence" value="ECO:0007669"/>
    <property type="project" value="TreeGrafter"/>
</dbReference>
<dbReference type="GO" id="GO:0003735">
    <property type="term" value="F:structural constituent of ribosome"/>
    <property type="evidence" value="ECO:0007669"/>
    <property type="project" value="InterPro"/>
</dbReference>
<dbReference type="GO" id="GO:0006412">
    <property type="term" value="P:translation"/>
    <property type="evidence" value="ECO:0007669"/>
    <property type="project" value="UniProtKB-UniRule"/>
</dbReference>
<dbReference type="CDD" id="cd00432">
    <property type="entry name" value="Ribosomal_L18_L5e"/>
    <property type="match status" value="1"/>
</dbReference>
<dbReference type="FunFam" id="3.30.420.100:FF:000001">
    <property type="entry name" value="50S ribosomal protein L18"/>
    <property type="match status" value="1"/>
</dbReference>
<dbReference type="Gene3D" id="3.30.420.100">
    <property type="match status" value="1"/>
</dbReference>
<dbReference type="HAMAP" id="MF_01337_B">
    <property type="entry name" value="Ribosomal_uL18_B"/>
    <property type="match status" value="1"/>
</dbReference>
<dbReference type="InterPro" id="IPR004389">
    <property type="entry name" value="Ribosomal_uL18_bac-type"/>
</dbReference>
<dbReference type="InterPro" id="IPR005484">
    <property type="entry name" value="Ribosomal_uL18_bac/euk"/>
</dbReference>
<dbReference type="NCBIfam" id="TIGR00060">
    <property type="entry name" value="L18_bact"/>
    <property type="match status" value="1"/>
</dbReference>
<dbReference type="PANTHER" id="PTHR12899">
    <property type="entry name" value="39S RIBOSOMAL PROTEIN L18, MITOCHONDRIAL"/>
    <property type="match status" value="1"/>
</dbReference>
<dbReference type="PANTHER" id="PTHR12899:SF3">
    <property type="entry name" value="LARGE RIBOSOMAL SUBUNIT PROTEIN UL18M"/>
    <property type="match status" value="1"/>
</dbReference>
<dbReference type="Pfam" id="PF00861">
    <property type="entry name" value="Ribosomal_L18p"/>
    <property type="match status" value="1"/>
</dbReference>
<dbReference type="SUPFAM" id="SSF53137">
    <property type="entry name" value="Translational machinery components"/>
    <property type="match status" value="1"/>
</dbReference>